<comment type="function">
    <text evidence="1">Dicer-like endonuclease involved in cleaving double-stranded RNA in the RNA interference (RNAi) pathway. Produces 21 to 25 bp dsRNAs (siRNAs) which target the selective destruction of homologous RNAs leading to sequence-specific suppression of gene expression, called post-transcriptional gene silencing (PTGS). Part of a broad host defense response against viral infection and transposons (By similarity).</text>
</comment>
<comment type="cofactor">
    <cofactor evidence="1">
        <name>Mg(2+)</name>
        <dbReference type="ChEBI" id="CHEBI:18420"/>
    </cofactor>
    <cofactor evidence="1">
        <name>Mn(2+)</name>
        <dbReference type="ChEBI" id="CHEBI:29035"/>
    </cofactor>
</comment>
<comment type="similarity">
    <text evidence="7">Belongs to the helicase family. Dicer subfamily.</text>
</comment>
<comment type="sequence caution" evidence="9">
    <conflict type="erroneous gene model prediction">
        <sequence resource="EMBL-CDS" id="CAK48679"/>
    </conflict>
</comment>
<sequence>MPSAHAFDMRITSDIYKPDQHLPMETMKVCAVTMTEDLQEDDGSSDESDNDEREDHSKTGVSQQRITQNAKFKALLAQRADTGPIHDVSVTHDLPDAQLSTAHLVAKQDLGIGTLDPREYQLELFERAKVQNTIAVLDTGSGKTLIAVLLLKHTLEKELNDRMEGKPHRIAFFLVDSVTLAYQQAAVLRNNLDQSVGHFFGAMGTDLWSKSVWDQHFQKNMVIVCTAEILNQCLLNSYIKMSQINILIFDEAHHTKKDHPYARIIRDSYLEEVYSKRPRIFGMTASPIDTKGDIVDEATRLEKLLDSRIATTSNMSLLRQVARRPVERVWSFNKLEQPFATSLYKHLEDRFGDMACLEGIFRFAWQASSELGRWCSDRAWARALADDVLPKLEGSVRKTANSETSSNVPESAYKEILRITEASEIVKSYAFSSPETFGQLSPKVQVLREELARYFGRQTETKCIVFTQKRYTALILAELFQTLNIPFLRPGVLIGVRSGDLAGMNITFRQQFISLVKFRTGEINCLFATSVAEEGLDIPDCNLVVRFDLYQTLIQYVQSRGRARHFNSTYASMVERGNLEHEQRLLEVQDAEMMQSFCRTLPEDRLLYGFDHDLDTVLQKDEGNRTFRIKSTGAKLTYHSATAILARYASSLQYEKEFSAQVTYVVLPINGAFVCEVILPEKSPIRGLTGSPAMKKSIAKRSAAFDTCLLLRKNKLLDDHFNSIYHRRLPAMRNAKLAITSKRTSQYDMISKPSLWGRKQGMPPKELHGTFITFLPSMQLSHEPAPLLLFTRERLPHFPEFPIFLDDDVETTIITTPLEKQLLLSEKEVDALTVFTLRVFRDVFHKTYDKEPEKMAYWLAPAKVQSSYLPSYDPRQILDWESLTYVRDNDSIPFSTNADPESWVDLFVFDAWDGRCRFFTVGVEHSLTPSSPPPPFVARRRHMNDVMNYCLSLSKNSRAKFLSTCHWDQPVLRAELVRLRRNLLDKMTDTERDVETRCFICIEPLKVSAIPASTAFSCLAFPAIISRIDAYLISLQGCESLNFTVKLDLALEAFTKDSDNTDEHRAQQIHVQRGMGRNYERLEFLGDCFLKMATSIALFTQNPDDDEFDYHVNRMCLICNKNLFNAAVDKEIYKYIRSRGFSRHTWYPEGLKLLQGKDHSRKATTESKHALAEKTIADVCEALIGAALLSGGPDHRFDMAVKAVTTLVNSPSHKAERWKDYISFYTIPKYQRRAADGAELYLSRKIEEKLSYRFRYPTLLGSAFTHPSYPSAWAKVPCYQRLEFLGDSLIDMVCVEDLFARFPDRDPQWLTEHKMAMVSNKFLGALAVKLGLHTHLKYFSAPLQSQITQYAEEIQTAEGESEGAVDYWTVTKDPPKCLPDMVEAYVGAVFVDSDFNFEVIERFFRDYIKPFFEDMAIYDTFANKHPTTFLHNRLTNEFGCVNYCLKAGEMPSIDGAPAGVLAAVIVHDVVIAEGTATSGRYAKVKASEKALAVLDEISSAEFQRKFRCDCRESGDSARLDIGTAI</sequence>
<protein>
    <recommendedName>
        <fullName>Dicer-like protein 1</fullName>
    </recommendedName>
    <domain>
        <recommendedName>
            <fullName>Endoribonuclease dcl1</fullName>
            <ecNumber>3.1.26.-</ecNumber>
        </recommendedName>
    </domain>
    <domain>
        <recommendedName>
            <fullName>ATP-dependent helicase dcl1</fullName>
            <ecNumber>3.6.4.-</ecNumber>
        </recommendedName>
    </domain>
</protein>
<gene>
    <name type="primary">dcl1</name>
    <name type="ORF">An18g02950</name>
</gene>
<proteinExistence type="inferred from homology"/>
<evidence type="ECO:0000250" key="1"/>
<evidence type="ECO:0000250" key="2">
    <source>
        <dbReference type="UniProtKB" id="Q09884"/>
    </source>
</evidence>
<evidence type="ECO:0000255" key="3">
    <source>
        <dbReference type="PROSITE-ProRule" id="PRU00142"/>
    </source>
</evidence>
<evidence type="ECO:0000255" key="4">
    <source>
        <dbReference type="PROSITE-ProRule" id="PRU00177"/>
    </source>
</evidence>
<evidence type="ECO:0000255" key="5">
    <source>
        <dbReference type="PROSITE-ProRule" id="PRU00541"/>
    </source>
</evidence>
<evidence type="ECO:0000255" key="6">
    <source>
        <dbReference type="PROSITE-ProRule" id="PRU00542"/>
    </source>
</evidence>
<evidence type="ECO:0000255" key="7">
    <source>
        <dbReference type="PROSITE-ProRule" id="PRU00657"/>
    </source>
</evidence>
<evidence type="ECO:0000256" key="8">
    <source>
        <dbReference type="SAM" id="MobiDB-lite"/>
    </source>
</evidence>
<evidence type="ECO:0000305" key="9"/>
<dbReference type="EC" id="3.1.26.-"/>
<dbReference type="EC" id="3.6.4.-"/>
<dbReference type="EMBL" id="AM270401">
    <property type="protein sequence ID" value="CAK48679.1"/>
    <property type="status" value="ALT_SEQ"/>
    <property type="molecule type" value="Genomic_DNA"/>
</dbReference>
<dbReference type="SMR" id="A2RAF3"/>
<dbReference type="EnsemblFungi" id="CAK48679">
    <property type="protein sequence ID" value="CAK48679"/>
    <property type="gene ID" value="An18g02950"/>
</dbReference>
<dbReference type="Proteomes" id="UP000006706">
    <property type="component" value="Chromosome 8L"/>
</dbReference>
<dbReference type="GO" id="GO:0005737">
    <property type="term" value="C:cytoplasm"/>
    <property type="evidence" value="ECO:0007669"/>
    <property type="project" value="TreeGrafter"/>
</dbReference>
<dbReference type="GO" id="GO:0005634">
    <property type="term" value="C:nucleus"/>
    <property type="evidence" value="ECO:0007669"/>
    <property type="project" value="TreeGrafter"/>
</dbReference>
<dbReference type="GO" id="GO:0005524">
    <property type="term" value="F:ATP binding"/>
    <property type="evidence" value="ECO:0007669"/>
    <property type="project" value="UniProtKB-KW"/>
</dbReference>
<dbReference type="GO" id="GO:0003677">
    <property type="term" value="F:DNA binding"/>
    <property type="evidence" value="ECO:0007669"/>
    <property type="project" value="InterPro"/>
</dbReference>
<dbReference type="GO" id="GO:0004386">
    <property type="term" value="F:helicase activity"/>
    <property type="evidence" value="ECO:0007669"/>
    <property type="project" value="UniProtKB-KW"/>
</dbReference>
<dbReference type="GO" id="GO:0046872">
    <property type="term" value="F:metal ion binding"/>
    <property type="evidence" value="ECO:0007669"/>
    <property type="project" value="UniProtKB-KW"/>
</dbReference>
<dbReference type="GO" id="GO:0004525">
    <property type="term" value="F:ribonuclease III activity"/>
    <property type="evidence" value="ECO:0007669"/>
    <property type="project" value="InterPro"/>
</dbReference>
<dbReference type="GO" id="GO:0003723">
    <property type="term" value="F:RNA binding"/>
    <property type="evidence" value="ECO:0007669"/>
    <property type="project" value="UniProtKB-KW"/>
</dbReference>
<dbReference type="GO" id="GO:0051607">
    <property type="term" value="P:defense response to virus"/>
    <property type="evidence" value="ECO:0007669"/>
    <property type="project" value="UniProtKB-KW"/>
</dbReference>
<dbReference type="GO" id="GO:0050688">
    <property type="term" value="P:regulation of defense response to virus"/>
    <property type="evidence" value="ECO:0007669"/>
    <property type="project" value="UniProtKB-KW"/>
</dbReference>
<dbReference type="GO" id="GO:0030422">
    <property type="term" value="P:siRNA processing"/>
    <property type="evidence" value="ECO:0007669"/>
    <property type="project" value="TreeGrafter"/>
</dbReference>
<dbReference type="CDD" id="cd18034">
    <property type="entry name" value="DEXHc_dicer"/>
    <property type="match status" value="1"/>
</dbReference>
<dbReference type="CDD" id="cd00593">
    <property type="entry name" value="RIBOc"/>
    <property type="match status" value="2"/>
</dbReference>
<dbReference type="CDD" id="cd18802">
    <property type="entry name" value="SF2_C_dicer"/>
    <property type="match status" value="1"/>
</dbReference>
<dbReference type="FunFam" id="1.10.1520.10:FF:000015">
    <property type="entry name" value="Dicer-like protein 1"/>
    <property type="match status" value="1"/>
</dbReference>
<dbReference type="FunFam" id="1.10.1520.10:FF:000026">
    <property type="entry name" value="Dicer-like protein 1"/>
    <property type="match status" value="1"/>
</dbReference>
<dbReference type="FunFam" id="3.30.160.380:FF:000004">
    <property type="entry name" value="Dicer-like protein 1"/>
    <property type="match status" value="1"/>
</dbReference>
<dbReference type="FunFam" id="3.40.50.300:FF:001669">
    <property type="entry name" value="Dicer-like protein 1"/>
    <property type="match status" value="1"/>
</dbReference>
<dbReference type="FunFam" id="3.40.50.300:FF:001988">
    <property type="entry name" value="Dicer-like protein 1"/>
    <property type="match status" value="1"/>
</dbReference>
<dbReference type="Gene3D" id="3.30.160.380">
    <property type="entry name" value="Dicer dimerisation domain"/>
    <property type="match status" value="1"/>
</dbReference>
<dbReference type="Gene3D" id="3.40.50.300">
    <property type="entry name" value="P-loop containing nucleotide triphosphate hydrolases"/>
    <property type="match status" value="2"/>
</dbReference>
<dbReference type="Gene3D" id="1.10.1520.10">
    <property type="entry name" value="Ribonuclease III domain"/>
    <property type="match status" value="2"/>
</dbReference>
<dbReference type="InterPro" id="IPR038248">
    <property type="entry name" value="Dicer_dimer_sf"/>
</dbReference>
<dbReference type="InterPro" id="IPR005034">
    <property type="entry name" value="Dicer_dimerisation_dom"/>
</dbReference>
<dbReference type="InterPro" id="IPR056755">
    <property type="entry name" value="DSRM_2"/>
</dbReference>
<dbReference type="InterPro" id="IPR006935">
    <property type="entry name" value="Helicase/UvrB_N"/>
</dbReference>
<dbReference type="InterPro" id="IPR014001">
    <property type="entry name" value="Helicase_ATP-bd"/>
</dbReference>
<dbReference type="InterPro" id="IPR001650">
    <property type="entry name" value="Helicase_C-like"/>
</dbReference>
<dbReference type="InterPro" id="IPR027417">
    <property type="entry name" value="P-loop_NTPase"/>
</dbReference>
<dbReference type="InterPro" id="IPR003100">
    <property type="entry name" value="PAZ_dom"/>
</dbReference>
<dbReference type="InterPro" id="IPR000999">
    <property type="entry name" value="RNase_III_dom"/>
</dbReference>
<dbReference type="InterPro" id="IPR036389">
    <property type="entry name" value="RNase_III_sf"/>
</dbReference>
<dbReference type="PANTHER" id="PTHR14950:SF62">
    <property type="entry name" value="DICER-LIKE PROTEIN 1"/>
    <property type="match status" value="1"/>
</dbReference>
<dbReference type="PANTHER" id="PTHR14950">
    <property type="entry name" value="DICER-RELATED"/>
    <property type="match status" value="1"/>
</dbReference>
<dbReference type="Pfam" id="PF03368">
    <property type="entry name" value="Dicer_dimer"/>
    <property type="match status" value="1"/>
</dbReference>
<dbReference type="Pfam" id="PF24995">
    <property type="entry name" value="DSRM_2"/>
    <property type="match status" value="1"/>
</dbReference>
<dbReference type="Pfam" id="PF00271">
    <property type="entry name" value="Helicase_C"/>
    <property type="match status" value="1"/>
</dbReference>
<dbReference type="Pfam" id="PF04851">
    <property type="entry name" value="ResIII"/>
    <property type="match status" value="1"/>
</dbReference>
<dbReference type="Pfam" id="PF00636">
    <property type="entry name" value="Ribonuclease_3"/>
    <property type="match status" value="2"/>
</dbReference>
<dbReference type="SMART" id="SM00487">
    <property type="entry name" value="DEXDc"/>
    <property type="match status" value="1"/>
</dbReference>
<dbReference type="SMART" id="SM00490">
    <property type="entry name" value="HELICc"/>
    <property type="match status" value="1"/>
</dbReference>
<dbReference type="SMART" id="SM00535">
    <property type="entry name" value="RIBOc"/>
    <property type="match status" value="2"/>
</dbReference>
<dbReference type="SUPFAM" id="SSF52540">
    <property type="entry name" value="P-loop containing nucleoside triphosphate hydrolases"/>
    <property type="match status" value="1"/>
</dbReference>
<dbReference type="SUPFAM" id="SSF69065">
    <property type="entry name" value="RNase III domain-like"/>
    <property type="match status" value="2"/>
</dbReference>
<dbReference type="PROSITE" id="PS51327">
    <property type="entry name" value="DICER_DSRBF"/>
    <property type="match status" value="1"/>
</dbReference>
<dbReference type="PROSITE" id="PS51192">
    <property type="entry name" value="HELICASE_ATP_BIND_1"/>
    <property type="match status" value="1"/>
</dbReference>
<dbReference type="PROSITE" id="PS51194">
    <property type="entry name" value="HELICASE_CTER"/>
    <property type="match status" value="1"/>
</dbReference>
<dbReference type="PROSITE" id="PS50821">
    <property type="entry name" value="PAZ"/>
    <property type="match status" value="1"/>
</dbReference>
<dbReference type="PROSITE" id="PS00517">
    <property type="entry name" value="RNASE_3_1"/>
    <property type="match status" value="1"/>
</dbReference>
<dbReference type="PROSITE" id="PS50142">
    <property type="entry name" value="RNASE_3_2"/>
    <property type="match status" value="2"/>
</dbReference>
<reference key="1">
    <citation type="journal article" date="2007" name="Nat. Biotechnol.">
        <title>Genome sequencing and analysis of the versatile cell factory Aspergillus niger CBS 513.88.</title>
        <authorList>
            <person name="Pel H.J."/>
            <person name="de Winde J.H."/>
            <person name="Archer D.B."/>
            <person name="Dyer P.S."/>
            <person name="Hofmann G."/>
            <person name="Schaap P.J."/>
            <person name="Turner G."/>
            <person name="de Vries R.P."/>
            <person name="Albang R."/>
            <person name="Albermann K."/>
            <person name="Andersen M.R."/>
            <person name="Bendtsen J.D."/>
            <person name="Benen J.A.E."/>
            <person name="van den Berg M."/>
            <person name="Breestraat S."/>
            <person name="Caddick M.X."/>
            <person name="Contreras R."/>
            <person name="Cornell M."/>
            <person name="Coutinho P.M."/>
            <person name="Danchin E.G.J."/>
            <person name="Debets A.J.M."/>
            <person name="Dekker P."/>
            <person name="van Dijck P.W.M."/>
            <person name="van Dijk A."/>
            <person name="Dijkhuizen L."/>
            <person name="Driessen A.J.M."/>
            <person name="d'Enfert C."/>
            <person name="Geysens S."/>
            <person name="Goosen C."/>
            <person name="Groot G.S.P."/>
            <person name="de Groot P.W.J."/>
            <person name="Guillemette T."/>
            <person name="Henrissat B."/>
            <person name="Herweijer M."/>
            <person name="van den Hombergh J.P.T.W."/>
            <person name="van den Hondel C.A.M.J.J."/>
            <person name="van der Heijden R.T.J.M."/>
            <person name="van der Kaaij R.M."/>
            <person name="Klis F.M."/>
            <person name="Kools H.J."/>
            <person name="Kubicek C.P."/>
            <person name="van Kuyk P.A."/>
            <person name="Lauber J."/>
            <person name="Lu X."/>
            <person name="van der Maarel M.J.E.C."/>
            <person name="Meulenberg R."/>
            <person name="Menke H."/>
            <person name="Mortimer M.A."/>
            <person name="Nielsen J."/>
            <person name="Oliver S.G."/>
            <person name="Olsthoorn M."/>
            <person name="Pal K."/>
            <person name="van Peij N.N.M.E."/>
            <person name="Ram A.F.J."/>
            <person name="Rinas U."/>
            <person name="Roubos J.A."/>
            <person name="Sagt C.M.J."/>
            <person name="Schmoll M."/>
            <person name="Sun J."/>
            <person name="Ussery D."/>
            <person name="Varga J."/>
            <person name="Vervecken W."/>
            <person name="van de Vondervoort P.J.J."/>
            <person name="Wedler H."/>
            <person name="Woesten H.A.B."/>
            <person name="Zeng A.-P."/>
            <person name="van Ooyen A.J.J."/>
            <person name="Visser J."/>
            <person name="Stam H."/>
        </authorList>
    </citation>
    <scope>NUCLEOTIDE SEQUENCE [LARGE SCALE GENOMIC DNA]</scope>
    <source>
        <strain>ATCC MYA-4892 / CBS 513.88 / FGSC A1513</strain>
    </source>
</reference>
<keyword id="KW-0051">Antiviral defense</keyword>
<keyword id="KW-0930">Antiviral protein</keyword>
<keyword id="KW-0067">ATP-binding</keyword>
<keyword id="KW-0347">Helicase</keyword>
<keyword id="KW-0378">Hydrolase</keyword>
<keyword id="KW-0460">Magnesium</keyword>
<keyword id="KW-0464">Manganese</keyword>
<keyword id="KW-0479">Metal-binding</keyword>
<keyword id="KW-0547">Nucleotide-binding</keyword>
<keyword id="KW-1185">Reference proteome</keyword>
<keyword id="KW-0677">Repeat</keyword>
<keyword id="KW-0694">RNA-binding</keyword>
<keyword id="KW-0862">Zinc</keyword>
<accession>A2RAF3</accession>
<feature type="chain" id="PRO_0000306775" description="Dicer-like protein 1">
    <location>
        <begin position="1"/>
        <end position="1525"/>
    </location>
</feature>
<feature type="domain" description="Helicase ATP-binding" evidence="5">
    <location>
        <begin position="124"/>
        <end position="305"/>
    </location>
</feature>
<feature type="domain" description="Helicase C-terminal" evidence="6">
    <location>
        <begin position="439"/>
        <end position="605"/>
    </location>
</feature>
<feature type="domain" description="Dicer dsRNA-binding fold" evidence="7">
    <location>
        <begin position="641"/>
        <end position="731"/>
    </location>
</feature>
<feature type="domain" description="PAZ" evidence="3">
    <location>
        <begin position="881"/>
        <end position="1009"/>
    </location>
</feature>
<feature type="domain" description="RNase III 1" evidence="4">
    <location>
        <begin position="1032"/>
        <end position="1192"/>
    </location>
</feature>
<feature type="domain" description="RNase III 2" evidence="4">
    <location>
        <begin position="1243"/>
        <end position="1394"/>
    </location>
</feature>
<feature type="domain" description="DRBM">
    <location>
        <begin position="1428"/>
        <end position="1496"/>
    </location>
</feature>
<feature type="region of interest" description="Disordered" evidence="8">
    <location>
        <begin position="37"/>
        <end position="65"/>
    </location>
</feature>
<feature type="short sequence motif" description="DEAH box">
    <location>
        <begin position="250"/>
        <end position="253"/>
    </location>
</feature>
<feature type="compositionally biased region" description="Acidic residues" evidence="8">
    <location>
        <begin position="37"/>
        <end position="52"/>
    </location>
</feature>
<feature type="binding site" evidence="5">
    <location>
        <begin position="137"/>
        <end position="144"/>
    </location>
    <ligand>
        <name>ATP</name>
        <dbReference type="ChEBI" id="CHEBI:30616"/>
    </ligand>
</feature>
<feature type="binding site" evidence="1">
    <location>
        <position position="1283"/>
    </location>
    <ligand>
        <name>Mg(2+)</name>
        <dbReference type="ChEBI" id="CHEBI:18420"/>
    </ligand>
</feature>
<feature type="binding site" evidence="1">
    <location>
        <position position="1380"/>
    </location>
    <ligand>
        <name>Mg(2+)</name>
        <dbReference type="ChEBI" id="CHEBI:18420"/>
    </ligand>
</feature>
<feature type="binding site" evidence="1">
    <location>
        <position position="1383"/>
    </location>
    <ligand>
        <name>Mg(2+)</name>
        <dbReference type="ChEBI" id="CHEBI:18420"/>
    </ligand>
</feature>
<feature type="binding site" evidence="2">
    <location>
        <position position="1440"/>
    </location>
    <ligand>
        <name>Zn(2+)</name>
        <dbReference type="ChEBI" id="CHEBI:29105"/>
    </ligand>
</feature>
<feature type="binding site" evidence="2">
    <location>
        <position position="1467"/>
    </location>
    <ligand>
        <name>Zn(2+)</name>
        <dbReference type="ChEBI" id="CHEBI:29105"/>
    </ligand>
</feature>
<feature type="binding site" evidence="2">
    <location>
        <position position="1508"/>
    </location>
    <ligand>
        <name>Zn(2+)</name>
        <dbReference type="ChEBI" id="CHEBI:29105"/>
    </ligand>
</feature>
<feature type="binding site" evidence="2">
    <location>
        <position position="1510"/>
    </location>
    <ligand>
        <name>Zn(2+)</name>
        <dbReference type="ChEBI" id="CHEBI:29105"/>
    </ligand>
</feature>
<feature type="site" description="Important for activity" evidence="1">
    <location>
        <position position="1376"/>
    </location>
</feature>
<name>DCL1_ASPNC</name>
<organism>
    <name type="scientific">Aspergillus niger (strain ATCC MYA-4892 / CBS 513.88 / FGSC A1513)</name>
    <dbReference type="NCBI Taxonomy" id="425011"/>
    <lineage>
        <taxon>Eukaryota</taxon>
        <taxon>Fungi</taxon>
        <taxon>Dikarya</taxon>
        <taxon>Ascomycota</taxon>
        <taxon>Pezizomycotina</taxon>
        <taxon>Eurotiomycetes</taxon>
        <taxon>Eurotiomycetidae</taxon>
        <taxon>Eurotiales</taxon>
        <taxon>Aspergillaceae</taxon>
        <taxon>Aspergillus</taxon>
        <taxon>Aspergillus subgen. Circumdati</taxon>
    </lineage>
</organism>